<gene>
    <name evidence="1" type="primary">metG</name>
    <name type="ordered locus">COXBURSA331_A1883</name>
</gene>
<accession>A9NA60</accession>
<feature type="chain" id="PRO_1000075583" description="Methionine--tRNA ligase">
    <location>
        <begin position="1"/>
        <end position="546"/>
    </location>
</feature>
<feature type="short sequence motif" description="'HIGH' region">
    <location>
        <begin position="15"/>
        <end position="25"/>
    </location>
</feature>
<feature type="short sequence motif" description="'KMSKS' region">
    <location>
        <begin position="332"/>
        <end position="336"/>
    </location>
</feature>
<feature type="binding site" evidence="1">
    <location>
        <position position="146"/>
    </location>
    <ligand>
        <name>Zn(2+)</name>
        <dbReference type="ChEBI" id="CHEBI:29105"/>
    </ligand>
</feature>
<feature type="binding site" evidence="1">
    <location>
        <position position="149"/>
    </location>
    <ligand>
        <name>Zn(2+)</name>
        <dbReference type="ChEBI" id="CHEBI:29105"/>
    </ligand>
</feature>
<feature type="binding site" evidence="1">
    <location>
        <position position="159"/>
    </location>
    <ligand>
        <name>Zn(2+)</name>
        <dbReference type="ChEBI" id="CHEBI:29105"/>
    </ligand>
</feature>
<feature type="binding site" evidence="1">
    <location>
        <position position="162"/>
    </location>
    <ligand>
        <name>Zn(2+)</name>
        <dbReference type="ChEBI" id="CHEBI:29105"/>
    </ligand>
</feature>
<feature type="binding site" evidence="1">
    <location>
        <position position="335"/>
    </location>
    <ligand>
        <name>ATP</name>
        <dbReference type="ChEBI" id="CHEBI:30616"/>
    </ligand>
</feature>
<organism>
    <name type="scientific">Coxiella burnetii (strain RSA 331 / Henzerling II)</name>
    <dbReference type="NCBI Taxonomy" id="360115"/>
    <lineage>
        <taxon>Bacteria</taxon>
        <taxon>Pseudomonadati</taxon>
        <taxon>Pseudomonadota</taxon>
        <taxon>Gammaproteobacteria</taxon>
        <taxon>Legionellales</taxon>
        <taxon>Coxiellaceae</taxon>
        <taxon>Coxiella</taxon>
    </lineage>
</organism>
<keyword id="KW-0030">Aminoacyl-tRNA synthetase</keyword>
<keyword id="KW-0067">ATP-binding</keyword>
<keyword id="KW-0963">Cytoplasm</keyword>
<keyword id="KW-0436">Ligase</keyword>
<keyword id="KW-0479">Metal-binding</keyword>
<keyword id="KW-0547">Nucleotide-binding</keyword>
<keyword id="KW-0648">Protein biosynthesis</keyword>
<keyword id="KW-0862">Zinc</keyword>
<protein>
    <recommendedName>
        <fullName evidence="1">Methionine--tRNA ligase</fullName>
        <ecNumber evidence="1">6.1.1.10</ecNumber>
    </recommendedName>
    <alternativeName>
        <fullName evidence="1">Methionyl-tRNA synthetase</fullName>
        <shortName evidence="1">MetRS</shortName>
    </alternativeName>
</protein>
<sequence>MTTEKRQILVTAALPYANGPIHLGHMVEHIQADIWVRFQRLKGNDCLFICGEDAHGTAIMITAQKQGLPPEALVAKMHKEHARDLGGFLIEYDNFYTTHSPENRELAELIYTRLKDKGDIFAKTISQAYDPVKEIFLPDRFIRGTCPRCGAKDQYGDVCEVCGATYSPTELIDPVSALSGAKPIEKNSEHFFFSLNRYTQLLKKWIDAGHLQPQVANKLKEWFSEDLKPWDISRDAPYFGFEIPHAANKYFYVWLDAPIGYMASLKNLSKQRPSVNFDAYWKEGSQTELYHFVGKDIVYFHALFWPAMLSGAGFRLPTTIYVHGYLTVNGQKMSKSRGTFITAHHYLDHLSPEYLRYYYAAKLSAQVEDIDLNLDDFIQRVNADLIGKYVNLASRCAGFITKNFGGKLANELPEPDLYESFLQTEQTITDYYESLNYSKAVRVIMSLADRANQYIDAKKPWALAKEINQEAQVQAVCTQGLNLFKILTTYLKPILPVTAKKVEQFLNCDELNFANLKTPLLDHSVNPFEPLMQRLLPETAAQLTHE</sequence>
<dbReference type="EC" id="6.1.1.10" evidence="1"/>
<dbReference type="EMBL" id="CP000890">
    <property type="protein sequence ID" value="ABX77657.1"/>
    <property type="molecule type" value="Genomic_DNA"/>
</dbReference>
<dbReference type="RefSeq" id="WP_010958377.1">
    <property type="nucleotide sequence ID" value="NC_010117.1"/>
</dbReference>
<dbReference type="SMR" id="A9NA60"/>
<dbReference type="KEGG" id="cbs:COXBURSA331_A1883"/>
<dbReference type="HOGENOM" id="CLU_009710_7_0_6"/>
<dbReference type="GO" id="GO:0005829">
    <property type="term" value="C:cytosol"/>
    <property type="evidence" value="ECO:0007669"/>
    <property type="project" value="TreeGrafter"/>
</dbReference>
<dbReference type="GO" id="GO:0005524">
    <property type="term" value="F:ATP binding"/>
    <property type="evidence" value="ECO:0007669"/>
    <property type="project" value="UniProtKB-UniRule"/>
</dbReference>
<dbReference type="GO" id="GO:0046872">
    <property type="term" value="F:metal ion binding"/>
    <property type="evidence" value="ECO:0007669"/>
    <property type="project" value="UniProtKB-KW"/>
</dbReference>
<dbReference type="GO" id="GO:0004825">
    <property type="term" value="F:methionine-tRNA ligase activity"/>
    <property type="evidence" value="ECO:0007669"/>
    <property type="project" value="UniProtKB-UniRule"/>
</dbReference>
<dbReference type="GO" id="GO:0006431">
    <property type="term" value="P:methionyl-tRNA aminoacylation"/>
    <property type="evidence" value="ECO:0007669"/>
    <property type="project" value="UniProtKB-UniRule"/>
</dbReference>
<dbReference type="CDD" id="cd07957">
    <property type="entry name" value="Anticodon_Ia_Met"/>
    <property type="match status" value="1"/>
</dbReference>
<dbReference type="CDD" id="cd00814">
    <property type="entry name" value="MetRS_core"/>
    <property type="match status" value="1"/>
</dbReference>
<dbReference type="FunFam" id="1.10.730.10:FF:000005">
    <property type="entry name" value="Methionine--tRNA ligase"/>
    <property type="match status" value="1"/>
</dbReference>
<dbReference type="FunFam" id="2.20.28.20:FF:000001">
    <property type="entry name" value="Methionine--tRNA ligase"/>
    <property type="match status" value="1"/>
</dbReference>
<dbReference type="Gene3D" id="3.40.50.620">
    <property type="entry name" value="HUPs"/>
    <property type="match status" value="1"/>
</dbReference>
<dbReference type="Gene3D" id="1.10.730.10">
    <property type="entry name" value="Isoleucyl-tRNA Synthetase, Domain 1"/>
    <property type="match status" value="1"/>
</dbReference>
<dbReference type="Gene3D" id="2.20.28.20">
    <property type="entry name" value="Methionyl-tRNA synthetase, Zn-domain"/>
    <property type="match status" value="1"/>
</dbReference>
<dbReference type="HAMAP" id="MF_00098">
    <property type="entry name" value="Met_tRNA_synth_type1"/>
    <property type="match status" value="1"/>
</dbReference>
<dbReference type="InterPro" id="IPR001412">
    <property type="entry name" value="aa-tRNA-synth_I_CS"/>
</dbReference>
<dbReference type="InterPro" id="IPR041872">
    <property type="entry name" value="Anticodon_Met"/>
</dbReference>
<dbReference type="InterPro" id="IPR023458">
    <property type="entry name" value="Met-tRNA_ligase_1"/>
</dbReference>
<dbReference type="InterPro" id="IPR014758">
    <property type="entry name" value="Met-tRNA_synth"/>
</dbReference>
<dbReference type="InterPro" id="IPR015413">
    <property type="entry name" value="Methionyl/Leucyl_tRNA_Synth"/>
</dbReference>
<dbReference type="InterPro" id="IPR033911">
    <property type="entry name" value="MetRS_core"/>
</dbReference>
<dbReference type="InterPro" id="IPR029038">
    <property type="entry name" value="MetRS_Zn"/>
</dbReference>
<dbReference type="InterPro" id="IPR014729">
    <property type="entry name" value="Rossmann-like_a/b/a_fold"/>
</dbReference>
<dbReference type="InterPro" id="IPR009080">
    <property type="entry name" value="tRNAsynth_Ia_anticodon-bd"/>
</dbReference>
<dbReference type="NCBIfam" id="TIGR00398">
    <property type="entry name" value="metG"/>
    <property type="match status" value="1"/>
</dbReference>
<dbReference type="NCBIfam" id="NF001100">
    <property type="entry name" value="PRK00133.1"/>
    <property type="match status" value="1"/>
</dbReference>
<dbReference type="PANTHER" id="PTHR45765">
    <property type="entry name" value="METHIONINE--TRNA LIGASE"/>
    <property type="match status" value="1"/>
</dbReference>
<dbReference type="PANTHER" id="PTHR45765:SF1">
    <property type="entry name" value="METHIONINE--TRNA LIGASE, CYTOPLASMIC"/>
    <property type="match status" value="1"/>
</dbReference>
<dbReference type="Pfam" id="PF19303">
    <property type="entry name" value="Anticodon_3"/>
    <property type="match status" value="1"/>
</dbReference>
<dbReference type="Pfam" id="PF09334">
    <property type="entry name" value="tRNA-synt_1g"/>
    <property type="match status" value="1"/>
</dbReference>
<dbReference type="PRINTS" id="PR01041">
    <property type="entry name" value="TRNASYNTHMET"/>
</dbReference>
<dbReference type="SUPFAM" id="SSF47323">
    <property type="entry name" value="Anticodon-binding domain of a subclass of class I aminoacyl-tRNA synthetases"/>
    <property type="match status" value="1"/>
</dbReference>
<dbReference type="SUPFAM" id="SSF57770">
    <property type="entry name" value="Methionyl-tRNA synthetase (MetRS), Zn-domain"/>
    <property type="match status" value="1"/>
</dbReference>
<dbReference type="SUPFAM" id="SSF52374">
    <property type="entry name" value="Nucleotidylyl transferase"/>
    <property type="match status" value="1"/>
</dbReference>
<dbReference type="PROSITE" id="PS00178">
    <property type="entry name" value="AA_TRNA_LIGASE_I"/>
    <property type="match status" value="1"/>
</dbReference>
<proteinExistence type="inferred from homology"/>
<reference key="1">
    <citation type="submission" date="2007-11" db="EMBL/GenBank/DDBJ databases">
        <title>Genome sequencing of phylogenetically and phenotypically diverse Coxiella burnetii isolates.</title>
        <authorList>
            <person name="Seshadri R."/>
            <person name="Samuel J.E."/>
        </authorList>
    </citation>
    <scope>NUCLEOTIDE SEQUENCE [LARGE SCALE GENOMIC DNA]</scope>
    <source>
        <strain>RSA 331 / Henzerling II</strain>
    </source>
</reference>
<name>SYM_COXBR</name>
<evidence type="ECO:0000255" key="1">
    <source>
        <dbReference type="HAMAP-Rule" id="MF_00098"/>
    </source>
</evidence>
<comment type="function">
    <text evidence="1">Is required not only for elongation of protein synthesis but also for the initiation of all mRNA translation through initiator tRNA(fMet) aminoacylation.</text>
</comment>
<comment type="catalytic activity">
    <reaction evidence="1">
        <text>tRNA(Met) + L-methionine + ATP = L-methionyl-tRNA(Met) + AMP + diphosphate</text>
        <dbReference type="Rhea" id="RHEA:13481"/>
        <dbReference type="Rhea" id="RHEA-COMP:9667"/>
        <dbReference type="Rhea" id="RHEA-COMP:9698"/>
        <dbReference type="ChEBI" id="CHEBI:30616"/>
        <dbReference type="ChEBI" id="CHEBI:33019"/>
        <dbReference type="ChEBI" id="CHEBI:57844"/>
        <dbReference type="ChEBI" id="CHEBI:78442"/>
        <dbReference type="ChEBI" id="CHEBI:78530"/>
        <dbReference type="ChEBI" id="CHEBI:456215"/>
        <dbReference type="EC" id="6.1.1.10"/>
    </reaction>
</comment>
<comment type="cofactor">
    <cofactor evidence="1">
        <name>Zn(2+)</name>
        <dbReference type="ChEBI" id="CHEBI:29105"/>
    </cofactor>
    <text evidence="1">Binds 1 zinc ion per subunit.</text>
</comment>
<comment type="subunit">
    <text evidence="1">Monomer.</text>
</comment>
<comment type="subcellular location">
    <subcellularLocation>
        <location evidence="1">Cytoplasm</location>
    </subcellularLocation>
</comment>
<comment type="similarity">
    <text evidence="1">Belongs to the class-I aminoacyl-tRNA synthetase family. MetG type 1 subfamily.</text>
</comment>